<feature type="chain" id="PRO_1000065943" description="Orotidine 5'-phosphate decarboxylase">
    <location>
        <begin position="1"/>
        <end position="230"/>
    </location>
</feature>
<feature type="active site" description="Proton donor" evidence="1">
    <location>
        <position position="60"/>
    </location>
</feature>
<feature type="binding site" evidence="1">
    <location>
        <position position="10"/>
    </location>
    <ligand>
        <name>substrate</name>
    </ligand>
</feature>
<feature type="binding site" evidence="1">
    <location>
        <position position="31"/>
    </location>
    <ligand>
        <name>substrate</name>
    </ligand>
</feature>
<feature type="binding site" evidence="1">
    <location>
        <begin position="58"/>
        <end position="67"/>
    </location>
    <ligand>
        <name>substrate</name>
    </ligand>
</feature>
<feature type="binding site" evidence="1">
    <location>
        <position position="117"/>
    </location>
    <ligand>
        <name>substrate</name>
    </ligand>
</feature>
<feature type="binding site" evidence="1">
    <location>
        <position position="179"/>
    </location>
    <ligand>
        <name>substrate</name>
    </ligand>
</feature>
<feature type="binding site" evidence="1">
    <location>
        <position position="188"/>
    </location>
    <ligand>
        <name>substrate</name>
    </ligand>
</feature>
<feature type="binding site" evidence="1">
    <location>
        <position position="208"/>
    </location>
    <ligand>
        <name>substrate</name>
    </ligand>
</feature>
<feature type="binding site" evidence="1">
    <location>
        <position position="209"/>
    </location>
    <ligand>
        <name>substrate</name>
    </ligand>
</feature>
<proteinExistence type="inferred from homology"/>
<gene>
    <name evidence="1" type="primary">pyrF</name>
    <name type="ordered locus">SAHV_1194</name>
</gene>
<comment type="function">
    <text evidence="1">Catalyzes the decarboxylation of orotidine 5'-monophosphate (OMP) to uridine 5'-monophosphate (UMP).</text>
</comment>
<comment type="catalytic activity">
    <reaction evidence="1">
        <text>orotidine 5'-phosphate + H(+) = UMP + CO2</text>
        <dbReference type="Rhea" id="RHEA:11596"/>
        <dbReference type="ChEBI" id="CHEBI:15378"/>
        <dbReference type="ChEBI" id="CHEBI:16526"/>
        <dbReference type="ChEBI" id="CHEBI:57538"/>
        <dbReference type="ChEBI" id="CHEBI:57865"/>
        <dbReference type="EC" id="4.1.1.23"/>
    </reaction>
</comment>
<comment type="pathway">
    <text evidence="1">Pyrimidine metabolism; UMP biosynthesis via de novo pathway; UMP from orotate: step 2/2.</text>
</comment>
<comment type="subunit">
    <text evidence="1">Homodimer.</text>
</comment>
<comment type="similarity">
    <text evidence="1">Belongs to the OMP decarboxylase family. Type 1 subfamily.</text>
</comment>
<organism>
    <name type="scientific">Staphylococcus aureus (strain Mu3 / ATCC 700698)</name>
    <dbReference type="NCBI Taxonomy" id="418127"/>
    <lineage>
        <taxon>Bacteria</taxon>
        <taxon>Bacillati</taxon>
        <taxon>Bacillota</taxon>
        <taxon>Bacilli</taxon>
        <taxon>Bacillales</taxon>
        <taxon>Staphylococcaceae</taxon>
        <taxon>Staphylococcus</taxon>
    </lineage>
</organism>
<sequence length="230" mass="25619">MKDLPIIALDFESKEKVNQFLDLFDESLFVKVGMELFYQEGPQLINEIKERGHDVFLDLKLHDIPNTVGKAMEGLAKLNVDLVNVHAAGGVKMMSEAIKGLRKHNQHTKIIAVTQLTSTTEDMLRHEQNIQTSIEEAVLNYAKLANAAGLDGVVCSPLESRMLTEKLGTSFLKVTPGIRPKGASQDDQHRITTPEEARQLGSTHIVVGRPITQSDNPVESYHKIKESWLV</sequence>
<accession>A7X1F5</accession>
<keyword id="KW-0210">Decarboxylase</keyword>
<keyword id="KW-0456">Lyase</keyword>
<keyword id="KW-0665">Pyrimidine biosynthesis</keyword>
<name>PYRF_STAA1</name>
<protein>
    <recommendedName>
        <fullName evidence="1">Orotidine 5'-phosphate decarboxylase</fullName>
        <ecNumber evidence="1">4.1.1.23</ecNumber>
    </recommendedName>
    <alternativeName>
        <fullName evidence="1">OMP decarboxylase</fullName>
        <shortName evidence="1">OMPDCase</shortName>
        <shortName evidence="1">OMPdecase</shortName>
    </alternativeName>
</protein>
<reference key="1">
    <citation type="journal article" date="2008" name="Antimicrob. Agents Chemother.">
        <title>Mutated response regulator graR is responsible for phenotypic conversion of Staphylococcus aureus from heterogeneous vancomycin-intermediate resistance to vancomycin-intermediate resistance.</title>
        <authorList>
            <person name="Neoh H.-M."/>
            <person name="Cui L."/>
            <person name="Yuzawa H."/>
            <person name="Takeuchi F."/>
            <person name="Matsuo M."/>
            <person name="Hiramatsu K."/>
        </authorList>
    </citation>
    <scope>NUCLEOTIDE SEQUENCE [LARGE SCALE GENOMIC DNA]</scope>
    <source>
        <strain>Mu3 / ATCC 700698</strain>
    </source>
</reference>
<evidence type="ECO:0000255" key="1">
    <source>
        <dbReference type="HAMAP-Rule" id="MF_01200"/>
    </source>
</evidence>
<dbReference type="EC" id="4.1.1.23" evidence="1"/>
<dbReference type="EMBL" id="AP009324">
    <property type="protein sequence ID" value="BAF78077.1"/>
    <property type="molecule type" value="Genomic_DNA"/>
</dbReference>
<dbReference type="RefSeq" id="WP_000654067.1">
    <property type="nucleotide sequence ID" value="NC_009782.1"/>
</dbReference>
<dbReference type="SMR" id="A7X1F5"/>
<dbReference type="KEGG" id="saw:SAHV_1194"/>
<dbReference type="HOGENOM" id="CLU_067069_1_1_9"/>
<dbReference type="UniPathway" id="UPA00070">
    <property type="reaction ID" value="UER00120"/>
</dbReference>
<dbReference type="GO" id="GO:0005829">
    <property type="term" value="C:cytosol"/>
    <property type="evidence" value="ECO:0007669"/>
    <property type="project" value="TreeGrafter"/>
</dbReference>
<dbReference type="GO" id="GO:0004590">
    <property type="term" value="F:orotidine-5'-phosphate decarboxylase activity"/>
    <property type="evidence" value="ECO:0007669"/>
    <property type="project" value="UniProtKB-UniRule"/>
</dbReference>
<dbReference type="GO" id="GO:0006207">
    <property type="term" value="P:'de novo' pyrimidine nucleobase biosynthetic process"/>
    <property type="evidence" value="ECO:0007669"/>
    <property type="project" value="InterPro"/>
</dbReference>
<dbReference type="GO" id="GO:0044205">
    <property type="term" value="P:'de novo' UMP biosynthetic process"/>
    <property type="evidence" value="ECO:0007669"/>
    <property type="project" value="UniProtKB-UniRule"/>
</dbReference>
<dbReference type="CDD" id="cd04725">
    <property type="entry name" value="OMP_decarboxylase_like"/>
    <property type="match status" value="1"/>
</dbReference>
<dbReference type="FunFam" id="3.20.20.70:FF:000015">
    <property type="entry name" value="Orotidine 5'-phosphate decarboxylase"/>
    <property type="match status" value="1"/>
</dbReference>
<dbReference type="Gene3D" id="3.20.20.70">
    <property type="entry name" value="Aldolase class I"/>
    <property type="match status" value="1"/>
</dbReference>
<dbReference type="HAMAP" id="MF_01200_B">
    <property type="entry name" value="OMPdecase_type1_B"/>
    <property type="match status" value="1"/>
</dbReference>
<dbReference type="InterPro" id="IPR013785">
    <property type="entry name" value="Aldolase_TIM"/>
</dbReference>
<dbReference type="InterPro" id="IPR014732">
    <property type="entry name" value="OMPdecase"/>
</dbReference>
<dbReference type="InterPro" id="IPR018089">
    <property type="entry name" value="OMPdecase_AS"/>
</dbReference>
<dbReference type="InterPro" id="IPR047596">
    <property type="entry name" value="OMPdecase_bac"/>
</dbReference>
<dbReference type="InterPro" id="IPR001754">
    <property type="entry name" value="OMPdeCOase_dom"/>
</dbReference>
<dbReference type="InterPro" id="IPR011060">
    <property type="entry name" value="RibuloseP-bd_barrel"/>
</dbReference>
<dbReference type="NCBIfam" id="NF001273">
    <property type="entry name" value="PRK00230.1"/>
    <property type="match status" value="1"/>
</dbReference>
<dbReference type="NCBIfam" id="TIGR01740">
    <property type="entry name" value="pyrF"/>
    <property type="match status" value="1"/>
</dbReference>
<dbReference type="PANTHER" id="PTHR32119">
    <property type="entry name" value="OROTIDINE 5'-PHOSPHATE DECARBOXYLASE"/>
    <property type="match status" value="1"/>
</dbReference>
<dbReference type="PANTHER" id="PTHR32119:SF2">
    <property type="entry name" value="OROTIDINE 5'-PHOSPHATE DECARBOXYLASE"/>
    <property type="match status" value="1"/>
</dbReference>
<dbReference type="Pfam" id="PF00215">
    <property type="entry name" value="OMPdecase"/>
    <property type="match status" value="1"/>
</dbReference>
<dbReference type="SMART" id="SM00934">
    <property type="entry name" value="OMPdecase"/>
    <property type="match status" value="1"/>
</dbReference>
<dbReference type="SUPFAM" id="SSF51366">
    <property type="entry name" value="Ribulose-phoshate binding barrel"/>
    <property type="match status" value="1"/>
</dbReference>
<dbReference type="PROSITE" id="PS00156">
    <property type="entry name" value="OMPDECASE"/>
    <property type="match status" value="1"/>
</dbReference>